<accession>Q72ER5</accession>
<sequence>MVMDIEAKKAVIDAHAKHEGDTGSPEVQVALLTARIEQLTGHFKVHKKDYHSRTGLLKLVGQRRKLLNYLKKKDVQRYRALIEKLGLRK</sequence>
<name>RS15_NITV2</name>
<gene>
    <name evidence="1" type="primary">rpsO</name>
    <name type="ordered locus">DVU_0504</name>
</gene>
<comment type="function">
    <text evidence="1">One of the primary rRNA binding proteins, it binds directly to 16S rRNA where it helps nucleate assembly of the platform of the 30S subunit by binding and bridging several RNA helices of the 16S rRNA.</text>
</comment>
<comment type="function">
    <text evidence="1">Forms an intersubunit bridge (bridge B4) with the 23S rRNA of the 50S subunit in the ribosome.</text>
</comment>
<comment type="subunit">
    <text evidence="1">Part of the 30S ribosomal subunit. Forms a bridge to the 50S subunit in the 70S ribosome, contacting the 23S rRNA.</text>
</comment>
<comment type="similarity">
    <text evidence="1">Belongs to the universal ribosomal protein uS15 family.</text>
</comment>
<keyword id="KW-1185">Reference proteome</keyword>
<keyword id="KW-0687">Ribonucleoprotein</keyword>
<keyword id="KW-0689">Ribosomal protein</keyword>
<keyword id="KW-0694">RNA-binding</keyword>
<keyword id="KW-0699">rRNA-binding</keyword>
<reference key="1">
    <citation type="journal article" date="2004" name="Nat. Biotechnol.">
        <title>The genome sequence of the anaerobic, sulfate-reducing bacterium Desulfovibrio vulgaris Hildenborough.</title>
        <authorList>
            <person name="Heidelberg J.F."/>
            <person name="Seshadri R."/>
            <person name="Haveman S.A."/>
            <person name="Hemme C.L."/>
            <person name="Paulsen I.T."/>
            <person name="Kolonay J.F."/>
            <person name="Eisen J.A."/>
            <person name="Ward N.L."/>
            <person name="Methe B.A."/>
            <person name="Brinkac L.M."/>
            <person name="Daugherty S.C."/>
            <person name="DeBoy R.T."/>
            <person name="Dodson R.J."/>
            <person name="Durkin A.S."/>
            <person name="Madupu R."/>
            <person name="Nelson W.C."/>
            <person name="Sullivan S.A."/>
            <person name="Fouts D.E."/>
            <person name="Haft D.H."/>
            <person name="Selengut J."/>
            <person name="Peterson J.D."/>
            <person name="Davidsen T.M."/>
            <person name="Zafar N."/>
            <person name="Zhou L."/>
            <person name="Radune D."/>
            <person name="Dimitrov G."/>
            <person name="Hance M."/>
            <person name="Tran K."/>
            <person name="Khouri H.M."/>
            <person name="Gill J."/>
            <person name="Utterback T.R."/>
            <person name="Feldblyum T.V."/>
            <person name="Wall J.D."/>
            <person name="Voordouw G."/>
            <person name="Fraser C.M."/>
        </authorList>
    </citation>
    <scope>NUCLEOTIDE SEQUENCE [LARGE SCALE GENOMIC DNA]</scope>
    <source>
        <strain>ATCC 29579 / DSM 644 / CCUG 34227 / NCIMB 8303 / VKM B-1760 / Hildenborough</strain>
    </source>
</reference>
<protein>
    <recommendedName>
        <fullName evidence="1">Small ribosomal subunit protein uS15</fullName>
    </recommendedName>
    <alternativeName>
        <fullName evidence="2">30S ribosomal protein S15</fullName>
    </alternativeName>
</protein>
<proteinExistence type="inferred from homology"/>
<feature type="chain" id="PRO_0000115431" description="Small ribosomal subunit protein uS15">
    <location>
        <begin position="1"/>
        <end position="89"/>
    </location>
</feature>
<organism>
    <name type="scientific">Nitratidesulfovibrio vulgaris (strain ATCC 29579 / DSM 644 / CCUG 34227 / NCIMB 8303 / VKM B-1760 / Hildenborough)</name>
    <name type="common">Desulfovibrio vulgaris</name>
    <dbReference type="NCBI Taxonomy" id="882"/>
    <lineage>
        <taxon>Bacteria</taxon>
        <taxon>Pseudomonadati</taxon>
        <taxon>Thermodesulfobacteriota</taxon>
        <taxon>Desulfovibrionia</taxon>
        <taxon>Desulfovibrionales</taxon>
        <taxon>Desulfovibrionaceae</taxon>
        <taxon>Nitratidesulfovibrio</taxon>
    </lineage>
</organism>
<evidence type="ECO:0000255" key="1">
    <source>
        <dbReference type="HAMAP-Rule" id="MF_01343"/>
    </source>
</evidence>
<evidence type="ECO:0000305" key="2"/>
<dbReference type="EMBL" id="AE017285">
    <property type="protein sequence ID" value="AAS94986.1"/>
    <property type="molecule type" value="Genomic_DNA"/>
</dbReference>
<dbReference type="RefSeq" id="YP_009727.1">
    <property type="nucleotide sequence ID" value="NC_002937.3"/>
</dbReference>
<dbReference type="SMR" id="Q72ER5"/>
<dbReference type="STRING" id="882.DVU_0504"/>
<dbReference type="PaxDb" id="882-DVU_0504"/>
<dbReference type="EnsemblBacteria" id="AAS94986">
    <property type="protein sequence ID" value="AAS94986"/>
    <property type="gene ID" value="DVU_0504"/>
</dbReference>
<dbReference type="KEGG" id="dvu:DVU_0504"/>
<dbReference type="PATRIC" id="fig|882.5.peg.481"/>
<dbReference type="eggNOG" id="COG0184">
    <property type="taxonomic scope" value="Bacteria"/>
</dbReference>
<dbReference type="HOGENOM" id="CLU_148518_0_0_7"/>
<dbReference type="OrthoDB" id="9799262at2"/>
<dbReference type="PhylomeDB" id="Q72ER5"/>
<dbReference type="Proteomes" id="UP000002194">
    <property type="component" value="Chromosome"/>
</dbReference>
<dbReference type="GO" id="GO:0022627">
    <property type="term" value="C:cytosolic small ribosomal subunit"/>
    <property type="evidence" value="ECO:0007669"/>
    <property type="project" value="TreeGrafter"/>
</dbReference>
<dbReference type="GO" id="GO:0019843">
    <property type="term" value="F:rRNA binding"/>
    <property type="evidence" value="ECO:0007669"/>
    <property type="project" value="UniProtKB-UniRule"/>
</dbReference>
<dbReference type="GO" id="GO:0003735">
    <property type="term" value="F:structural constituent of ribosome"/>
    <property type="evidence" value="ECO:0007669"/>
    <property type="project" value="InterPro"/>
</dbReference>
<dbReference type="GO" id="GO:0006412">
    <property type="term" value="P:translation"/>
    <property type="evidence" value="ECO:0007669"/>
    <property type="project" value="UniProtKB-UniRule"/>
</dbReference>
<dbReference type="CDD" id="cd00353">
    <property type="entry name" value="Ribosomal_S15p_S13e"/>
    <property type="match status" value="1"/>
</dbReference>
<dbReference type="FunFam" id="1.10.287.10:FF:000002">
    <property type="entry name" value="30S ribosomal protein S15"/>
    <property type="match status" value="1"/>
</dbReference>
<dbReference type="Gene3D" id="6.10.250.3130">
    <property type="match status" value="1"/>
</dbReference>
<dbReference type="Gene3D" id="1.10.287.10">
    <property type="entry name" value="S15/NS1, RNA-binding"/>
    <property type="match status" value="1"/>
</dbReference>
<dbReference type="HAMAP" id="MF_01343_B">
    <property type="entry name" value="Ribosomal_uS15_B"/>
    <property type="match status" value="1"/>
</dbReference>
<dbReference type="InterPro" id="IPR000589">
    <property type="entry name" value="Ribosomal_uS15"/>
</dbReference>
<dbReference type="InterPro" id="IPR005290">
    <property type="entry name" value="Ribosomal_uS15_bac-type"/>
</dbReference>
<dbReference type="InterPro" id="IPR009068">
    <property type="entry name" value="uS15_NS1_RNA-bd_sf"/>
</dbReference>
<dbReference type="NCBIfam" id="TIGR00952">
    <property type="entry name" value="S15_bact"/>
    <property type="match status" value="1"/>
</dbReference>
<dbReference type="PANTHER" id="PTHR23321">
    <property type="entry name" value="RIBOSOMAL PROTEIN S15, BACTERIAL AND ORGANELLAR"/>
    <property type="match status" value="1"/>
</dbReference>
<dbReference type="PANTHER" id="PTHR23321:SF26">
    <property type="entry name" value="SMALL RIBOSOMAL SUBUNIT PROTEIN US15M"/>
    <property type="match status" value="1"/>
</dbReference>
<dbReference type="Pfam" id="PF00312">
    <property type="entry name" value="Ribosomal_S15"/>
    <property type="match status" value="1"/>
</dbReference>
<dbReference type="SMART" id="SM01387">
    <property type="entry name" value="Ribosomal_S15"/>
    <property type="match status" value="1"/>
</dbReference>
<dbReference type="SUPFAM" id="SSF47060">
    <property type="entry name" value="S15/NS1 RNA-binding domain"/>
    <property type="match status" value="1"/>
</dbReference>
<dbReference type="PROSITE" id="PS00362">
    <property type="entry name" value="RIBOSOMAL_S15"/>
    <property type="match status" value="1"/>
</dbReference>